<organism>
    <name type="scientific">Gallus gallus</name>
    <name type="common">Chicken</name>
    <dbReference type="NCBI Taxonomy" id="9031"/>
    <lineage>
        <taxon>Eukaryota</taxon>
        <taxon>Metazoa</taxon>
        <taxon>Chordata</taxon>
        <taxon>Craniata</taxon>
        <taxon>Vertebrata</taxon>
        <taxon>Euteleostomi</taxon>
        <taxon>Archelosauria</taxon>
        <taxon>Archosauria</taxon>
        <taxon>Dinosauria</taxon>
        <taxon>Saurischia</taxon>
        <taxon>Theropoda</taxon>
        <taxon>Coelurosauria</taxon>
        <taxon>Aves</taxon>
        <taxon>Neognathae</taxon>
        <taxon>Galloanserae</taxon>
        <taxon>Galliformes</taxon>
        <taxon>Phasianidae</taxon>
        <taxon>Phasianinae</taxon>
        <taxon>Gallus</taxon>
    </lineage>
</organism>
<gene>
    <name type="primary">P33MONOX</name>
    <name type="ORF">RCJMB04_31b20</name>
</gene>
<keyword id="KW-0963">Cytoplasm</keyword>
<keyword id="KW-0521">NADP</keyword>
<keyword id="KW-0560">Oxidoreductase</keyword>
<keyword id="KW-1185">Reference proteome</keyword>
<comment type="function">
    <text evidence="1">Potential NADPH-dependent oxidoreductase. May be involved in the regulation of neuronal survival, differentiation and axonal outgrowth (By similarity).</text>
</comment>
<comment type="subcellular location">
    <subcellularLocation>
        <location evidence="1">Cytoplasm</location>
    </subcellularLocation>
</comment>
<comment type="similarity">
    <text evidence="3">Belongs to the P33MONOX family.</text>
</comment>
<name>P33MX_CHICK</name>
<proteinExistence type="evidence at transcript level"/>
<reference key="1">
    <citation type="journal article" date="2005" name="Genome Biol.">
        <title>Full-length cDNAs from chicken bursal lymphocytes to facilitate gene function analysis.</title>
        <authorList>
            <person name="Caldwell R.B."/>
            <person name="Kierzek A.M."/>
            <person name="Arakawa H."/>
            <person name="Bezzubov Y."/>
            <person name="Zaim J."/>
            <person name="Fiedler P."/>
            <person name="Kutter S."/>
            <person name="Blagodatski A."/>
            <person name="Kostovska D."/>
            <person name="Koter M."/>
            <person name="Plachy J."/>
            <person name="Carninci P."/>
            <person name="Hayashizaki Y."/>
            <person name="Buerstedde J.-M."/>
        </authorList>
    </citation>
    <scope>NUCLEOTIDE SEQUENCE [LARGE SCALE MRNA]</scope>
    <source>
        <strain>CB</strain>
        <tissue>Bursa of Fabricius</tissue>
    </source>
</reference>
<evidence type="ECO:0000250" key="1"/>
<evidence type="ECO:0000256" key="2">
    <source>
        <dbReference type="SAM" id="MobiDB-lite"/>
    </source>
</evidence>
<evidence type="ECO:0000305" key="3"/>
<feature type="chain" id="PRO_0000307734" description="Putative monooxygenase p33MONOX">
    <location>
        <begin position="1"/>
        <end position="287"/>
    </location>
</feature>
<feature type="region of interest" description="Disordered" evidence="2">
    <location>
        <begin position="139"/>
        <end position="179"/>
    </location>
</feature>
<feature type="region of interest" description="Disordered" evidence="2">
    <location>
        <begin position="245"/>
        <end position="287"/>
    </location>
</feature>
<feature type="short sequence motif" description="Flavin-containing monooxygenase motif">
    <location>
        <begin position="50"/>
        <end position="60"/>
    </location>
</feature>
<feature type="compositionally biased region" description="Low complexity" evidence="2">
    <location>
        <begin position="152"/>
        <end position="165"/>
    </location>
</feature>
<protein>
    <recommendedName>
        <fullName>Putative monooxygenase p33MONOX</fullName>
        <ecNumber>1.-.-.-</ecNumber>
    </recommendedName>
</protein>
<sequence>MSLPLGVPRRAFSYDDALEDTAPMTPPPADLCANVLWKQPVIPERKYQELAKIEEGDANMNAPVITPSSSTESVNKVPVVKAKATHIIMNSLITKQTQESIQRFEQQAGLRDAGYTPHKGLTAEETKYHRVAEAVHKLKMQSGETTKDDKQTSSAQSTPSSTPHSSPKHKNRGWFSQGSSASITAPDFVAMEAGGDRLPSERWSFFGPKAIQKSTNDPGGFTIQSYKGAQKPSPMELMRAQATRMTEDPVTFKPPKMDIPVTEGRKQSSHSHNIKPRDLNVLTPTGF</sequence>
<accession>Q5F368</accession>
<dbReference type="EC" id="1.-.-.-"/>
<dbReference type="EMBL" id="AJ851782">
    <property type="protein sequence ID" value="CAH65416.1"/>
    <property type="molecule type" value="mRNA"/>
</dbReference>
<dbReference type="RefSeq" id="NP_001025781.1">
    <property type="nucleotide sequence ID" value="NM_001030610.1"/>
</dbReference>
<dbReference type="SMR" id="Q5F368"/>
<dbReference type="FunCoup" id="Q5F368">
    <property type="interactions" value="1025"/>
</dbReference>
<dbReference type="STRING" id="9031.ENSGALP00000065131"/>
<dbReference type="GlyGen" id="Q5F368">
    <property type="glycosylation" value="2 sites"/>
</dbReference>
<dbReference type="PaxDb" id="9031-ENSGALP00000005318"/>
<dbReference type="GeneID" id="416230"/>
<dbReference type="KEGG" id="gga:416230"/>
<dbReference type="CTD" id="57179"/>
<dbReference type="VEuPathDB" id="HostDB:geneid_416230"/>
<dbReference type="eggNOG" id="ENOG502QRB0">
    <property type="taxonomic scope" value="Eukaryota"/>
</dbReference>
<dbReference type="InParanoid" id="Q5F368"/>
<dbReference type="OrthoDB" id="8935954at2759"/>
<dbReference type="PhylomeDB" id="Q5F368"/>
<dbReference type="PRO" id="PR:Q5F368"/>
<dbReference type="Proteomes" id="UP000000539">
    <property type="component" value="Unassembled WGS sequence"/>
</dbReference>
<dbReference type="GO" id="GO:0005737">
    <property type="term" value="C:cytoplasm"/>
    <property type="evidence" value="ECO:0000250"/>
    <property type="project" value="UniProtKB"/>
</dbReference>
<dbReference type="GO" id="GO:0016491">
    <property type="term" value="F:oxidoreductase activity"/>
    <property type="evidence" value="ECO:0007669"/>
    <property type="project" value="UniProtKB-KW"/>
</dbReference>
<dbReference type="InterPro" id="IPR026759">
    <property type="entry name" value="P33MONOX"/>
</dbReference>
<dbReference type="PANTHER" id="PTHR28342">
    <property type="entry name" value="MONOOXYGENASE P33MONOX-RELATED"/>
    <property type="match status" value="1"/>
</dbReference>
<dbReference type="PANTHER" id="PTHR28342:SF1">
    <property type="entry name" value="MONOOXYGENASE P33MONOX-RELATED"/>
    <property type="match status" value="1"/>
</dbReference>
<dbReference type="Pfam" id="PF15302">
    <property type="entry name" value="P33MONOX"/>
    <property type="match status" value="1"/>
</dbReference>